<gene>
    <name evidence="1" type="primary">rplW</name>
    <name type="ordered locus">GOX0378</name>
</gene>
<dbReference type="EMBL" id="CP000009">
    <property type="protein sequence ID" value="AAW60161.1"/>
    <property type="status" value="ALT_INIT"/>
    <property type="molecule type" value="Genomic_DNA"/>
</dbReference>
<dbReference type="SMR" id="Q5FTY5"/>
<dbReference type="STRING" id="290633.GOX0378"/>
<dbReference type="KEGG" id="gox:GOX0378"/>
<dbReference type="eggNOG" id="COG0089">
    <property type="taxonomic scope" value="Bacteria"/>
</dbReference>
<dbReference type="HOGENOM" id="CLU_037562_3_1_5"/>
<dbReference type="Proteomes" id="UP000006375">
    <property type="component" value="Chromosome"/>
</dbReference>
<dbReference type="GO" id="GO:1990904">
    <property type="term" value="C:ribonucleoprotein complex"/>
    <property type="evidence" value="ECO:0007669"/>
    <property type="project" value="UniProtKB-KW"/>
</dbReference>
<dbReference type="GO" id="GO:0005840">
    <property type="term" value="C:ribosome"/>
    <property type="evidence" value="ECO:0007669"/>
    <property type="project" value="UniProtKB-KW"/>
</dbReference>
<dbReference type="GO" id="GO:0019843">
    <property type="term" value="F:rRNA binding"/>
    <property type="evidence" value="ECO:0007669"/>
    <property type="project" value="UniProtKB-UniRule"/>
</dbReference>
<dbReference type="GO" id="GO:0003735">
    <property type="term" value="F:structural constituent of ribosome"/>
    <property type="evidence" value="ECO:0007669"/>
    <property type="project" value="InterPro"/>
</dbReference>
<dbReference type="GO" id="GO:0006412">
    <property type="term" value="P:translation"/>
    <property type="evidence" value="ECO:0007669"/>
    <property type="project" value="UniProtKB-UniRule"/>
</dbReference>
<dbReference type="FunFam" id="3.30.70.330:FF:000001">
    <property type="entry name" value="50S ribosomal protein L23"/>
    <property type="match status" value="1"/>
</dbReference>
<dbReference type="Gene3D" id="3.30.70.330">
    <property type="match status" value="1"/>
</dbReference>
<dbReference type="HAMAP" id="MF_01369_B">
    <property type="entry name" value="Ribosomal_uL23_B"/>
    <property type="match status" value="1"/>
</dbReference>
<dbReference type="InterPro" id="IPR012677">
    <property type="entry name" value="Nucleotide-bd_a/b_plait_sf"/>
</dbReference>
<dbReference type="InterPro" id="IPR013025">
    <property type="entry name" value="Ribosomal_uL23-like"/>
</dbReference>
<dbReference type="InterPro" id="IPR012678">
    <property type="entry name" value="Ribosomal_uL23/eL15/eS24_sf"/>
</dbReference>
<dbReference type="NCBIfam" id="NF004359">
    <property type="entry name" value="PRK05738.1-3"/>
    <property type="match status" value="1"/>
</dbReference>
<dbReference type="NCBIfam" id="NF004360">
    <property type="entry name" value="PRK05738.1-5"/>
    <property type="match status" value="1"/>
</dbReference>
<dbReference type="NCBIfam" id="NF004363">
    <property type="entry name" value="PRK05738.2-4"/>
    <property type="match status" value="1"/>
</dbReference>
<dbReference type="NCBIfam" id="NF004366">
    <property type="entry name" value="PRK05738.3-2"/>
    <property type="match status" value="1"/>
</dbReference>
<dbReference type="PANTHER" id="PTHR11620">
    <property type="entry name" value="60S RIBOSOMAL PROTEIN L23A"/>
    <property type="match status" value="1"/>
</dbReference>
<dbReference type="Pfam" id="PF00276">
    <property type="entry name" value="Ribosomal_L23"/>
    <property type="match status" value="1"/>
</dbReference>
<dbReference type="SUPFAM" id="SSF54189">
    <property type="entry name" value="Ribosomal proteins S24e, L23 and L15e"/>
    <property type="match status" value="1"/>
</dbReference>
<keyword id="KW-1185">Reference proteome</keyword>
<keyword id="KW-0687">Ribonucleoprotein</keyword>
<keyword id="KW-0689">Ribosomal protein</keyword>
<keyword id="KW-0694">RNA-binding</keyword>
<keyword id="KW-0699">rRNA-binding</keyword>
<evidence type="ECO:0000255" key="1">
    <source>
        <dbReference type="HAMAP-Rule" id="MF_01369"/>
    </source>
</evidence>
<evidence type="ECO:0000305" key="2"/>
<comment type="function">
    <text evidence="1">One of the early assembly proteins it binds 23S rRNA. One of the proteins that surrounds the polypeptide exit tunnel on the outside of the ribosome. Forms the main docking site for trigger factor binding to the ribosome.</text>
</comment>
<comment type="subunit">
    <text evidence="1">Part of the 50S ribosomal subunit. Contacts protein L29, and trigger factor when it is bound to the ribosome.</text>
</comment>
<comment type="similarity">
    <text evidence="1">Belongs to the universal ribosomal protein uL23 family.</text>
</comment>
<comment type="sequence caution" evidence="2">
    <conflict type="erroneous initiation">
        <sequence resource="EMBL-CDS" id="AAW60161"/>
    </conflict>
</comment>
<sequence length="107" mass="11715">MNAHKTAQNMSQEALYDVVRAPLITEKATLLSERNQVVFKVAPSATKPQIKAAVEKLFNVKVTGVNTLVQKGKVKRVKGRPGRRSDIKKAYVQLAEGQSIDLTAKLG</sequence>
<name>RL23_GLUOX</name>
<accession>Q5FTY5</accession>
<proteinExistence type="inferred from homology"/>
<organism>
    <name type="scientific">Gluconobacter oxydans (strain 621H)</name>
    <name type="common">Gluconobacter suboxydans</name>
    <dbReference type="NCBI Taxonomy" id="290633"/>
    <lineage>
        <taxon>Bacteria</taxon>
        <taxon>Pseudomonadati</taxon>
        <taxon>Pseudomonadota</taxon>
        <taxon>Alphaproteobacteria</taxon>
        <taxon>Acetobacterales</taxon>
        <taxon>Acetobacteraceae</taxon>
        <taxon>Gluconobacter</taxon>
    </lineage>
</organism>
<reference key="1">
    <citation type="journal article" date="2005" name="Nat. Biotechnol.">
        <title>Complete genome sequence of the acetic acid bacterium Gluconobacter oxydans.</title>
        <authorList>
            <person name="Prust C."/>
            <person name="Hoffmeister M."/>
            <person name="Liesegang H."/>
            <person name="Wiezer A."/>
            <person name="Fricke W.F."/>
            <person name="Ehrenreich A."/>
            <person name="Gottschalk G."/>
            <person name="Deppenmeier U."/>
        </authorList>
    </citation>
    <scope>NUCLEOTIDE SEQUENCE [LARGE SCALE GENOMIC DNA]</scope>
    <source>
        <strain>621H</strain>
    </source>
</reference>
<feature type="chain" id="PRO_0000272754" description="Large ribosomal subunit protein uL23">
    <location>
        <begin position="1"/>
        <end position="107"/>
    </location>
</feature>
<protein>
    <recommendedName>
        <fullName evidence="1">Large ribosomal subunit protein uL23</fullName>
    </recommendedName>
    <alternativeName>
        <fullName evidence="2">50S ribosomal protein L23</fullName>
    </alternativeName>
</protein>